<evidence type="ECO:0000250" key="1"/>
<evidence type="ECO:0000255" key="2"/>
<evidence type="ECO:0000255" key="3">
    <source>
        <dbReference type="PROSITE-ProRule" id="PRU01240"/>
    </source>
</evidence>
<evidence type="ECO:0000305" key="4"/>
<reference key="1">
    <citation type="journal article" date="2009" name="Genome Res.">
        <title>Comparative genomic analyses of the human fungal pathogens Coccidioides and their relatives.</title>
        <authorList>
            <person name="Sharpton T.J."/>
            <person name="Stajich J.E."/>
            <person name="Rounsley S.D."/>
            <person name="Gardner M.J."/>
            <person name="Wortman J.R."/>
            <person name="Jordar V.S."/>
            <person name="Maiti R."/>
            <person name="Kodira C.D."/>
            <person name="Neafsey D.E."/>
            <person name="Zeng Q."/>
            <person name="Hung C.-Y."/>
            <person name="McMahan C."/>
            <person name="Muszewska A."/>
            <person name="Grynberg M."/>
            <person name="Mandel M.A."/>
            <person name="Kellner E.M."/>
            <person name="Barker B.M."/>
            <person name="Galgiani J.N."/>
            <person name="Orbach M.J."/>
            <person name="Kirkland T.N."/>
            <person name="Cole G.T."/>
            <person name="Henn M.R."/>
            <person name="Birren B.W."/>
            <person name="Taylor J.W."/>
        </authorList>
    </citation>
    <scope>NUCLEOTIDE SEQUENCE [LARGE SCALE GENOMIC DNA]</scope>
    <source>
        <strain>C735</strain>
    </source>
</reference>
<organism>
    <name type="scientific">Coccidioides posadasii (strain C735)</name>
    <name type="common">Valley fever fungus</name>
    <dbReference type="NCBI Taxonomy" id="222929"/>
    <lineage>
        <taxon>Eukaryota</taxon>
        <taxon>Fungi</taxon>
        <taxon>Dikarya</taxon>
        <taxon>Ascomycota</taxon>
        <taxon>Pezizomycotina</taxon>
        <taxon>Eurotiomycetes</taxon>
        <taxon>Eurotiomycetidae</taxon>
        <taxon>Onygenales</taxon>
        <taxon>Onygenaceae</taxon>
        <taxon>Coccidioides</taxon>
    </lineage>
</organism>
<protein>
    <recommendedName>
        <fullName>Subtilisin-like protease CPC735_005570</fullName>
        <ecNumber>3.4.21.-</ecNumber>
    </recommendedName>
</protein>
<proteinExistence type="inferred from homology"/>
<accession>C5P9H3</accession>
<keyword id="KW-0325">Glycoprotein</keyword>
<keyword id="KW-0378">Hydrolase</keyword>
<keyword id="KW-0645">Protease</keyword>
<keyword id="KW-0964">Secreted</keyword>
<keyword id="KW-0720">Serine protease</keyword>
<keyword id="KW-0732">Signal</keyword>
<keyword id="KW-0843">Virulence</keyword>
<keyword id="KW-0865">Zymogen</keyword>
<gene>
    <name type="ORF">CPC735_005570</name>
</gene>
<comment type="function">
    <text evidence="1">Secreted subtilisin-like serine protease with keratinolytic activity that contributes to pathogenicity.</text>
</comment>
<comment type="subcellular location">
    <subcellularLocation>
        <location evidence="1">Secreted</location>
    </subcellularLocation>
</comment>
<comment type="similarity">
    <text evidence="4">Belongs to the peptidase S8 family.</text>
</comment>
<dbReference type="EC" id="3.4.21.-"/>
<dbReference type="EMBL" id="ACFW01000030">
    <property type="protein sequence ID" value="EER26385.1"/>
    <property type="molecule type" value="Genomic_DNA"/>
</dbReference>
<dbReference type="RefSeq" id="XP_003068530.1">
    <property type="nucleotide sequence ID" value="XM_003068484.1"/>
</dbReference>
<dbReference type="SMR" id="C5P9H3"/>
<dbReference type="KEGG" id="cpw:9694013"/>
<dbReference type="VEuPathDB" id="FungiDB:CPC735_005570"/>
<dbReference type="HOGENOM" id="CLU_011263_1_3_1"/>
<dbReference type="OrthoDB" id="206201at2759"/>
<dbReference type="Proteomes" id="UP000009084">
    <property type="component" value="Unassembled WGS sequence"/>
</dbReference>
<dbReference type="GO" id="GO:0005576">
    <property type="term" value="C:extracellular region"/>
    <property type="evidence" value="ECO:0007669"/>
    <property type="project" value="UniProtKB-SubCell"/>
</dbReference>
<dbReference type="GO" id="GO:0004252">
    <property type="term" value="F:serine-type endopeptidase activity"/>
    <property type="evidence" value="ECO:0007669"/>
    <property type="project" value="InterPro"/>
</dbReference>
<dbReference type="GO" id="GO:0006508">
    <property type="term" value="P:proteolysis"/>
    <property type="evidence" value="ECO:0007669"/>
    <property type="project" value="UniProtKB-KW"/>
</dbReference>
<dbReference type="CDD" id="cd04077">
    <property type="entry name" value="Peptidases_S8_PCSK9_ProteinaseK_like"/>
    <property type="match status" value="1"/>
</dbReference>
<dbReference type="FunFam" id="3.40.50.200:FF:000014">
    <property type="entry name" value="Proteinase K"/>
    <property type="match status" value="1"/>
</dbReference>
<dbReference type="Gene3D" id="3.30.70.80">
    <property type="entry name" value="Peptidase S8 propeptide/proteinase inhibitor I9"/>
    <property type="match status" value="1"/>
</dbReference>
<dbReference type="Gene3D" id="3.40.50.200">
    <property type="entry name" value="Peptidase S8/S53 domain"/>
    <property type="match status" value="1"/>
</dbReference>
<dbReference type="InterPro" id="IPR034193">
    <property type="entry name" value="PCSK9_ProteinaseK-like"/>
</dbReference>
<dbReference type="InterPro" id="IPR000209">
    <property type="entry name" value="Peptidase_S8/S53_dom"/>
</dbReference>
<dbReference type="InterPro" id="IPR036852">
    <property type="entry name" value="Peptidase_S8/S53_dom_sf"/>
</dbReference>
<dbReference type="InterPro" id="IPR023827">
    <property type="entry name" value="Peptidase_S8_Asp-AS"/>
</dbReference>
<dbReference type="InterPro" id="IPR050131">
    <property type="entry name" value="Peptidase_S8_subtilisin-like"/>
</dbReference>
<dbReference type="InterPro" id="IPR015500">
    <property type="entry name" value="Peptidase_S8_subtilisin-rel"/>
</dbReference>
<dbReference type="InterPro" id="IPR010259">
    <property type="entry name" value="S8pro/Inhibitor_I9"/>
</dbReference>
<dbReference type="InterPro" id="IPR037045">
    <property type="entry name" value="S8pro/Inhibitor_I9_sf"/>
</dbReference>
<dbReference type="PANTHER" id="PTHR43806:SF11">
    <property type="entry name" value="CEREVISIN-RELATED"/>
    <property type="match status" value="1"/>
</dbReference>
<dbReference type="PANTHER" id="PTHR43806">
    <property type="entry name" value="PEPTIDASE S8"/>
    <property type="match status" value="1"/>
</dbReference>
<dbReference type="Pfam" id="PF05922">
    <property type="entry name" value="Inhibitor_I9"/>
    <property type="match status" value="1"/>
</dbReference>
<dbReference type="Pfam" id="PF00082">
    <property type="entry name" value="Peptidase_S8"/>
    <property type="match status" value="1"/>
</dbReference>
<dbReference type="PRINTS" id="PR00723">
    <property type="entry name" value="SUBTILISIN"/>
</dbReference>
<dbReference type="SUPFAM" id="SSF54897">
    <property type="entry name" value="Protease propeptides/inhibitors"/>
    <property type="match status" value="1"/>
</dbReference>
<dbReference type="SUPFAM" id="SSF52743">
    <property type="entry name" value="Subtilisin-like"/>
    <property type="match status" value="1"/>
</dbReference>
<dbReference type="PROSITE" id="PS51892">
    <property type="entry name" value="SUBTILASE"/>
    <property type="match status" value="1"/>
</dbReference>
<dbReference type="PROSITE" id="PS00136">
    <property type="entry name" value="SUBTILASE_ASP"/>
    <property type="match status" value="1"/>
</dbReference>
<name>SUB7D_COCP7</name>
<sequence length="394" mass="41203">MRAIISVALFLSLSLLSAVNAAEILSAGDTDDVIPDSYIVVMRDGLSTDAFNSHTTQISGFRNEDRNVKASLKKTFDLNGLKGYSGTFDEATIRQIANDPAVKYIEHDRIANARGLVEQQDAGWNLARISHKKTGARTYVYDKSAGAGISVCLVDTGVDVDNPDLGGRATWGANFVDNDDSDGNGHGTFLASLIAGQKHGVAKKAKIIAVKVLDANGSGSYSNVISGIDWCVKYAKEHGISERMVVNLSLGGGYSQAVNQAAENAVLAGMFVSAAVGGSNRDARNDSPASARGVCAIAASTMDDKAALFSNYGSIVAVYAPGQNIMAAGRMGSVTLSGTSFAAGHASGVGAYLLALEKITGDRVCTRIKELAIPVIRNSPSNTTRLLLYNGSGR</sequence>
<feature type="signal peptide" evidence="2">
    <location>
        <begin position="1"/>
        <end position="21"/>
    </location>
</feature>
<feature type="propeptide" id="PRO_0000407024" evidence="1">
    <location>
        <begin position="22"/>
        <end position="114"/>
    </location>
</feature>
<feature type="chain" id="PRO_0000407025" description="Subtilisin-like protease CPC735_005570">
    <location>
        <begin position="115"/>
        <end position="394"/>
    </location>
</feature>
<feature type="domain" description="Inhibitor I9" evidence="2">
    <location>
        <begin position="37"/>
        <end position="110"/>
    </location>
</feature>
<feature type="domain" description="Peptidase S8" evidence="3">
    <location>
        <begin position="123"/>
        <end position="394"/>
    </location>
</feature>
<feature type="active site" description="Charge relay system" evidence="3">
    <location>
        <position position="155"/>
    </location>
</feature>
<feature type="active site" description="Charge relay system" evidence="3">
    <location>
        <position position="186"/>
    </location>
</feature>
<feature type="active site" description="Charge relay system" evidence="3">
    <location>
        <position position="340"/>
    </location>
</feature>
<feature type="glycosylation site" description="N-linked (GlcNAc...) asparagine" evidence="2">
    <location>
        <position position="216"/>
    </location>
</feature>
<feature type="glycosylation site" description="N-linked (GlcNAc...) asparagine" evidence="2">
    <location>
        <position position="247"/>
    </location>
</feature>
<feature type="glycosylation site" description="N-linked (GlcNAc...) asparagine" evidence="2">
    <location>
        <position position="382"/>
    </location>
</feature>
<feature type="glycosylation site" description="N-linked (GlcNAc...) asparagine" evidence="2">
    <location>
        <position position="390"/>
    </location>
</feature>